<proteinExistence type="inferred from homology"/>
<accession>O22834</accession>
<organism>
    <name type="scientific">Arabidopsis thaliana</name>
    <name type="common">Mouse-ear cress</name>
    <dbReference type="NCBI Taxonomy" id="3702"/>
    <lineage>
        <taxon>Eukaryota</taxon>
        <taxon>Viridiplantae</taxon>
        <taxon>Streptophyta</taxon>
        <taxon>Embryophyta</taxon>
        <taxon>Tracheophyta</taxon>
        <taxon>Spermatophyta</taxon>
        <taxon>Magnoliopsida</taxon>
        <taxon>eudicotyledons</taxon>
        <taxon>Gunneridae</taxon>
        <taxon>Pentapetalae</taxon>
        <taxon>rosids</taxon>
        <taxon>malvids</taxon>
        <taxon>Brassicales</taxon>
        <taxon>Brassicaceae</taxon>
        <taxon>Camelineae</taxon>
        <taxon>Arabidopsis</taxon>
    </lineage>
</organism>
<dbReference type="EC" id="2.7.11.1"/>
<dbReference type="EMBL" id="AC002333">
    <property type="protein sequence ID" value="AAB64037.1"/>
    <property type="molecule type" value="Genomic_DNA"/>
</dbReference>
<dbReference type="EMBL" id="CP002685">
    <property type="protein sequence ID" value="AEC10308.1"/>
    <property type="molecule type" value="Genomic_DNA"/>
</dbReference>
<dbReference type="EMBL" id="CP002685">
    <property type="protein sequence ID" value="ANM61263.1"/>
    <property type="molecule type" value="Genomic_DNA"/>
</dbReference>
<dbReference type="PIR" id="C84869">
    <property type="entry name" value="C84869"/>
</dbReference>
<dbReference type="RefSeq" id="NP_001318417.1">
    <property type="nucleotide sequence ID" value="NM_001337051.1"/>
</dbReference>
<dbReference type="RefSeq" id="NP_181897.1">
    <property type="nucleotide sequence ID" value="NM_129931.2"/>
</dbReference>
<dbReference type="SMR" id="O22834"/>
<dbReference type="BioGRID" id="4307">
    <property type="interactions" value="8"/>
</dbReference>
<dbReference type="FunCoup" id="O22834">
    <property type="interactions" value="8"/>
</dbReference>
<dbReference type="IntAct" id="O22834">
    <property type="interactions" value="8"/>
</dbReference>
<dbReference type="STRING" id="3702.O22834"/>
<dbReference type="GlyCosmos" id="O22834">
    <property type="glycosylation" value="5 sites, No reported glycans"/>
</dbReference>
<dbReference type="GlyGen" id="O22834">
    <property type="glycosylation" value="5 sites"/>
</dbReference>
<dbReference type="PaxDb" id="3702-AT2G43690.1"/>
<dbReference type="EnsemblPlants" id="AT2G43690.1">
    <property type="protein sequence ID" value="AT2G43690.1"/>
    <property type="gene ID" value="AT2G43690"/>
</dbReference>
<dbReference type="EnsemblPlants" id="AT2G43690.3">
    <property type="protein sequence ID" value="AT2G43690.3"/>
    <property type="gene ID" value="AT2G43690"/>
</dbReference>
<dbReference type="GeneID" id="818971"/>
<dbReference type="Gramene" id="AT2G43690.1">
    <property type="protein sequence ID" value="AT2G43690.1"/>
    <property type="gene ID" value="AT2G43690"/>
</dbReference>
<dbReference type="Gramene" id="AT2G43690.3">
    <property type="protein sequence ID" value="AT2G43690.3"/>
    <property type="gene ID" value="AT2G43690"/>
</dbReference>
<dbReference type="KEGG" id="ath:AT2G43690"/>
<dbReference type="Araport" id="AT2G43690"/>
<dbReference type="TAIR" id="AT2G43690">
    <property type="gene designation" value="LECRK-V.3"/>
</dbReference>
<dbReference type="eggNOG" id="ENOG502QR0Z">
    <property type="taxonomic scope" value="Eukaryota"/>
</dbReference>
<dbReference type="HOGENOM" id="CLU_000288_62_6_1"/>
<dbReference type="InParanoid" id="O22834"/>
<dbReference type="PhylomeDB" id="O22834"/>
<dbReference type="PRO" id="PR:O22834"/>
<dbReference type="Proteomes" id="UP000006548">
    <property type="component" value="Chromosome 2"/>
</dbReference>
<dbReference type="ExpressionAtlas" id="O22834">
    <property type="expression patterns" value="baseline and differential"/>
</dbReference>
<dbReference type="GO" id="GO:0005886">
    <property type="term" value="C:plasma membrane"/>
    <property type="evidence" value="ECO:0000250"/>
    <property type="project" value="UniProtKB"/>
</dbReference>
<dbReference type="GO" id="GO:0005524">
    <property type="term" value="F:ATP binding"/>
    <property type="evidence" value="ECO:0007669"/>
    <property type="project" value="UniProtKB-KW"/>
</dbReference>
<dbReference type="GO" id="GO:0030246">
    <property type="term" value="F:carbohydrate binding"/>
    <property type="evidence" value="ECO:0007669"/>
    <property type="project" value="UniProtKB-KW"/>
</dbReference>
<dbReference type="GO" id="GO:0106310">
    <property type="term" value="F:protein serine kinase activity"/>
    <property type="evidence" value="ECO:0007669"/>
    <property type="project" value="RHEA"/>
</dbReference>
<dbReference type="GO" id="GO:0004674">
    <property type="term" value="F:protein serine/threonine kinase activity"/>
    <property type="evidence" value="ECO:0007669"/>
    <property type="project" value="UniProtKB-KW"/>
</dbReference>
<dbReference type="CDD" id="cd06899">
    <property type="entry name" value="lectin_legume_LecRK_Arcelin_ConA"/>
    <property type="match status" value="1"/>
</dbReference>
<dbReference type="FunFam" id="1.10.510.10:FF:000108">
    <property type="entry name" value="L-type lectin-domain containing receptor kinase S.4"/>
    <property type="match status" value="1"/>
</dbReference>
<dbReference type="FunFam" id="2.60.120.200:FF:000086">
    <property type="entry name" value="L-type lectin-domain containing receptor kinase S.4"/>
    <property type="match status" value="1"/>
</dbReference>
<dbReference type="FunFam" id="3.30.200.20:FF:000178">
    <property type="entry name" value="serine/threonine-protein kinase PBS1-like"/>
    <property type="match status" value="1"/>
</dbReference>
<dbReference type="Gene3D" id="2.60.120.200">
    <property type="match status" value="1"/>
</dbReference>
<dbReference type="Gene3D" id="3.30.200.20">
    <property type="entry name" value="Phosphorylase Kinase, domain 1"/>
    <property type="match status" value="1"/>
</dbReference>
<dbReference type="Gene3D" id="1.10.510.10">
    <property type="entry name" value="Transferase(Phosphotransferase) domain 1"/>
    <property type="match status" value="1"/>
</dbReference>
<dbReference type="InterPro" id="IPR013320">
    <property type="entry name" value="ConA-like_dom_sf"/>
</dbReference>
<dbReference type="InterPro" id="IPR011009">
    <property type="entry name" value="Kinase-like_dom_sf"/>
</dbReference>
<dbReference type="InterPro" id="IPR050528">
    <property type="entry name" value="L-type_Lectin-RKs"/>
</dbReference>
<dbReference type="InterPro" id="IPR001220">
    <property type="entry name" value="Legume_lectin_dom"/>
</dbReference>
<dbReference type="InterPro" id="IPR000719">
    <property type="entry name" value="Prot_kinase_dom"/>
</dbReference>
<dbReference type="InterPro" id="IPR008271">
    <property type="entry name" value="Ser/Thr_kinase_AS"/>
</dbReference>
<dbReference type="PANTHER" id="PTHR27007">
    <property type="match status" value="1"/>
</dbReference>
<dbReference type="Pfam" id="PF00139">
    <property type="entry name" value="Lectin_legB"/>
    <property type="match status" value="1"/>
</dbReference>
<dbReference type="Pfam" id="PF00069">
    <property type="entry name" value="Pkinase"/>
    <property type="match status" value="1"/>
</dbReference>
<dbReference type="SMART" id="SM00220">
    <property type="entry name" value="S_TKc"/>
    <property type="match status" value="1"/>
</dbReference>
<dbReference type="SUPFAM" id="SSF49899">
    <property type="entry name" value="Concanavalin A-like lectins/glucanases"/>
    <property type="match status" value="1"/>
</dbReference>
<dbReference type="SUPFAM" id="SSF56112">
    <property type="entry name" value="Protein kinase-like (PK-like)"/>
    <property type="match status" value="1"/>
</dbReference>
<dbReference type="PROSITE" id="PS50011">
    <property type="entry name" value="PROTEIN_KINASE_DOM"/>
    <property type="match status" value="1"/>
</dbReference>
<dbReference type="PROSITE" id="PS00108">
    <property type="entry name" value="PROTEIN_KINASE_ST"/>
    <property type="match status" value="1"/>
</dbReference>
<evidence type="ECO:0000250" key="1"/>
<evidence type="ECO:0000255" key="2"/>
<evidence type="ECO:0000255" key="3">
    <source>
        <dbReference type="PROSITE-ProRule" id="PRU00159"/>
    </source>
</evidence>
<evidence type="ECO:0000255" key="4">
    <source>
        <dbReference type="PROSITE-ProRule" id="PRU10027"/>
    </source>
</evidence>
<evidence type="ECO:0000305" key="5"/>
<comment type="catalytic activity">
    <reaction>
        <text>L-seryl-[protein] + ATP = O-phospho-L-seryl-[protein] + ADP + H(+)</text>
        <dbReference type="Rhea" id="RHEA:17989"/>
        <dbReference type="Rhea" id="RHEA-COMP:9863"/>
        <dbReference type="Rhea" id="RHEA-COMP:11604"/>
        <dbReference type="ChEBI" id="CHEBI:15378"/>
        <dbReference type="ChEBI" id="CHEBI:29999"/>
        <dbReference type="ChEBI" id="CHEBI:30616"/>
        <dbReference type="ChEBI" id="CHEBI:83421"/>
        <dbReference type="ChEBI" id="CHEBI:456216"/>
        <dbReference type="EC" id="2.7.11.1"/>
    </reaction>
</comment>
<comment type="catalytic activity">
    <reaction>
        <text>L-threonyl-[protein] + ATP = O-phospho-L-threonyl-[protein] + ADP + H(+)</text>
        <dbReference type="Rhea" id="RHEA:46608"/>
        <dbReference type="Rhea" id="RHEA-COMP:11060"/>
        <dbReference type="Rhea" id="RHEA-COMP:11605"/>
        <dbReference type="ChEBI" id="CHEBI:15378"/>
        <dbReference type="ChEBI" id="CHEBI:30013"/>
        <dbReference type="ChEBI" id="CHEBI:30616"/>
        <dbReference type="ChEBI" id="CHEBI:61977"/>
        <dbReference type="ChEBI" id="CHEBI:456216"/>
        <dbReference type="EC" id="2.7.11.1"/>
    </reaction>
</comment>
<comment type="subcellular location">
    <subcellularLocation>
        <location evidence="1">Cell membrane</location>
        <topology evidence="1">Single-pass type I membrane protein</topology>
    </subcellularLocation>
</comment>
<comment type="similarity">
    <text evidence="5">In the C-terminal section; belongs to the protein kinase superfamily. Ser/Thr protein kinase family.</text>
</comment>
<comment type="similarity">
    <text evidence="5">In the N-terminal section; belongs to the leguminous lectin family.</text>
</comment>
<keyword id="KW-0067">ATP-binding</keyword>
<keyword id="KW-1003">Cell membrane</keyword>
<keyword id="KW-0325">Glycoprotein</keyword>
<keyword id="KW-0418">Kinase</keyword>
<keyword id="KW-0430">Lectin</keyword>
<keyword id="KW-0472">Membrane</keyword>
<keyword id="KW-0547">Nucleotide-binding</keyword>
<keyword id="KW-0675">Receptor</keyword>
<keyword id="KW-1185">Reference proteome</keyword>
<keyword id="KW-0723">Serine/threonine-protein kinase</keyword>
<keyword id="KW-0732">Signal</keyword>
<keyword id="KW-0808">Transferase</keyword>
<keyword id="KW-0812">Transmembrane</keyword>
<keyword id="KW-1133">Transmembrane helix</keyword>
<feature type="signal peptide" evidence="2">
    <location>
        <begin position="1"/>
        <end position="26"/>
    </location>
</feature>
<feature type="chain" id="PRO_0000403091" description="Probable L-type lectin-domain containing receptor kinase V.3">
    <location>
        <begin position="27"/>
        <end position="664"/>
    </location>
</feature>
<feature type="topological domain" description="Extracellular" evidence="2">
    <location>
        <begin position="27"/>
        <end position="278"/>
    </location>
</feature>
<feature type="transmembrane region" description="Helical" evidence="2">
    <location>
        <begin position="279"/>
        <end position="299"/>
    </location>
</feature>
<feature type="topological domain" description="Cytoplasmic" evidence="2">
    <location>
        <begin position="300"/>
        <end position="664"/>
    </location>
</feature>
<feature type="domain" description="Protein kinase" evidence="3">
    <location>
        <begin position="335"/>
        <end position="617"/>
    </location>
</feature>
<feature type="region of interest" description="Legume-lectin like">
    <location>
        <begin position="28"/>
        <end position="250"/>
    </location>
</feature>
<feature type="active site" description="Proton acceptor" evidence="3 4">
    <location>
        <position position="461"/>
    </location>
</feature>
<feature type="binding site" evidence="3">
    <location>
        <begin position="341"/>
        <end position="349"/>
    </location>
    <ligand>
        <name>ATP</name>
        <dbReference type="ChEBI" id="CHEBI:30616"/>
    </ligand>
</feature>
<feature type="binding site" evidence="3">
    <location>
        <position position="364"/>
    </location>
    <ligand>
        <name>ATP</name>
        <dbReference type="ChEBI" id="CHEBI:30616"/>
    </ligand>
</feature>
<feature type="glycosylation site" description="N-linked (GlcNAc...) asparagine" evidence="2">
    <location>
        <position position="69"/>
    </location>
</feature>
<feature type="glycosylation site" description="N-linked (GlcNAc...) asparagine" evidence="2">
    <location>
        <position position="116"/>
    </location>
</feature>
<feature type="glycosylation site" description="N-linked (GlcNAc...) asparagine" evidence="2">
    <location>
        <position position="122"/>
    </location>
</feature>
<feature type="glycosylation site" description="N-linked (GlcNAc...) asparagine" evidence="2">
    <location>
        <position position="174"/>
    </location>
</feature>
<feature type="glycosylation site" description="N-linked (GlcNAc...) asparagine" evidence="2">
    <location>
        <position position="197"/>
    </location>
</feature>
<protein>
    <recommendedName>
        <fullName>Probable L-type lectin-domain containing receptor kinase V.3</fullName>
        <shortName>Arabidopsis thaliana lectin-receptor kinase c2</shortName>
        <shortName>AthlecRK-c2</shortName>
        <shortName>LecRK-V.3</shortName>
        <ecNumber>2.7.11.1</ecNumber>
    </recommendedName>
</protein>
<name>LRK53_ARATH</name>
<reference key="1">
    <citation type="journal article" date="1999" name="Nature">
        <title>Sequence and analysis of chromosome 2 of the plant Arabidopsis thaliana.</title>
        <authorList>
            <person name="Lin X."/>
            <person name="Kaul S."/>
            <person name="Rounsley S.D."/>
            <person name="Shea T.P."/>
            <person name="Benito M.-I."/>
            <person name="Town C.D."/>
            <person name="Fujii C.Y."/>
            <person name="Mason T.M."/>
            <person name="Bowman C.L."/>
            <person name="Barnstead M.E."/>
            <person name="Feldblyum T.V."/>
            <person name="Buell C.R."/>
            <person name="Ketchum K.A."/>
            <person name="Lee J.J."/>
            <person name="Ronning C.M."/>
            <person name="Koo H.L."/>
            <person name="Moffat K.S."/>
            <person name="Cronin L.A."/>
            <person name="Shen M."/>
            <person name="Pai G."/>
            <person name="Van Aken S."/>
            <person name="Umayam L."/>
            <person name="Tallon L.J."/>
            <person name="Gill J.E."/>
            <person name="Adams M.D."/>
            <person name="Carrera A.J."/>
            <person name="Creasy T.H."/>
            <person name="Goodman H.M."/>
            <person name="Somerville C.R."/>
            <person name="Copenhaver G.P."/>
            <person name="Preuss D."/>
            <person name="Nierman W.C."/>
            <person name="White O."/>
            <person name="Eisen J.A."/>
            <person name="Salzberg S.L."/>
            <person name="Fraser C.M."/>
            <person name="Venter J.C."/>
        </authorList>
    </citation>
    <scope>NUCLEOTIDE SEQUENCE [LARGE SCALE GENOMIC DNA]</scope>
    <source>
        <strain>cv. Columbia</strain>
    </source>
</reference>
<reference key="2">
    <citation type="journal article" date="2017" name="Plant J.">
        <title>Araport11: a complete reannotation of the Arabidopsis thaliana reference genome.</title>
        <authorList>
            <person name="Cheng C.Y."/>
            <person name="Krishnakumar V."/>
            <person name="Chan A.P."/>
            <person name="Thibaud-Nissen F."/>
            <person name="Schobel S."/>
            <person name="Town C.D."/>
        </authorList>
    </citation>
    <scope>GENOME REANNOTATION</scope>
    <source>
        <strain>cv. Columbia</strain>
    </source>
</reference>
<reference key="3">
    <citation type="journal article" date="1999" name="Plant Mol. Biol.">
        <title>Characterization of the Arabidopsis lecRK-a genes: members of a superfamily encoding putative receptors with an extracellular domain homologous to legume lectins.</title>
        <authorList>
            <person name="Herve C."/>
            <person name="Serres J."/>
            <person name="Dabos P."/>
            <person name="Canut H."/>
            <person name="Barre A."/>
            <person name="Rouge P."/>
            <person name="Lescure B."/>
        </authorList>
    </citation>
    <scope>GENE FAMILY</scope>
</reference>
<reference key="4">
    <citation type="journal article" date="2002" name="Crit. Rev. Plant Sci.">
        <title>Lectin receptor kinases in plants.</title>
        <authorList>
            <person name="Barre A."/>
            <person name="Herve C."/>
            <person name="Lescure B."/>
            <person name="Rouge P."/>
        </authorList>
    </citation>
    <scope>GENE FAMILY</scope>
</reference>
<reference key="5">
    <citation type="journal article" date="2009" name="J. Exp. Bot.">
        <title>Arabidopsis L-type lectin receptor kinases: phylogeny, classification, and expression profiles.</title>
        <authorList>
            <person name="Bouwmeester K."/>
            <person name="Govers F."/>
        </authorList>
    </citation>
    <scope>GENE FAMILY</scope>
    <scope>NOMENCLATURE</scope>
</reference>
<gene>
    <name type="primary">LECRK53</name>
    <name type="synonym">LECRKC2</name>
    <name type="ordered locus">At2g43690</name>
    <name type="ORF">F18O19.20</name>
</gene>
<sequence>MSMSCKINWLMVLVIIALSNLESSLGRLVFEGSAGLMNGFTTLTNTKKHAYGQAFNDEPFPFKNSVNGNMTSFSFTFFFAIVPEHIDKGSHGIAFVISPTRGIPGASADQYLGIFNDTNDGNSSNHIIAVELDIHKDDEFGDIDDNHVGININGMRSIVSAPAGYYDQNGQFKNLSLISGNLLRVTILYSQEEKQLNVTLSPAEEANVPKWPLLSLNKDLSPYLSKNMYIGFTASTGSVGAIHYMWMWYVFTFIIVPKLDFDIPTFPPYPKAESQVKLIVLVTFLTLALFVALAASALIVFFYKRHKKLLEVLEEWEVECGPHRFSYKELFNATNGFKQLLGEGGFGPVFKGTLSGSNAKIAVKRVSHDSSQGMRELLAEISTIGRLRHPNLVRLLGYCRYKEELYLVYDFLPNGSLDKYLYGTSDQKQLSWSQRFKIIKDVASALSYLHHGWIHVVIHRDIKPANVLIDDKMNASLGDFGLAKVYDQGYDPQTSRVAGTFGYMAPEIMRTGRPTMGTDVYAFGMFMLEVSCDRKLFEPRAESEEAILTNWAINCWENGDIVEAATERIRQDNDKGQLELVLKLGVLCSHEAEEVRPDMATVVKILNGVSELPDNLLDIVRSEKLENWYERYSKVIDPVTTEESIGNLAITEPILPSGRPRLFL</sequence>